<sequence length="54" mass="5839">IVAVDCSDYPKPVCSLDYMPLCGSDNTTYNNKCIFCNAVVDSNGTITLSHFGKC</sequence>
<keyword id="KW-0903">Direct protein sequencing</keyword>
<keyword id="KW-1015">Disulfide bond</keyword>
<keyword id="KW-0325">Glycoprotein</keyword>
<keyword id="KW-0646">Protease inhibitor</keyword>
<keyword id="KW-0677">Repeat</keyword>
<keyword id="KW-0964">Secreted</keyword>
<keyword id="KW-0722">Serine protease inhibitor</keyword>
<proteinExistence type="evidence at protein level"/>
<reference key="1">
    <citation type="journal article" date="1993" name="J. Protein Chem.">
        <title>Amino acid sequences of ovomucoid third domains from 27 additional species of birds.</title>
        <authorList>
            <person name="Apostol I."/>
            <person name="Giletto A."/>
            <person name="Komiyama T."/>
            <person name="Zhang W."/>
            <person name="Laskowski M. Jr."/>
        </authorList>
    </citation>
    <scope>PROTEIN SEQUENCE</scope>
</reference>
<name>IOVO_HAEME</name>
<feature type="chain" id="PRO_0000073075" description="Ovomucoid">
    <location>
        <begin position="1" status="less than"/>
        <end position="54" status="greater than"/>
    </location>
</feature>
<feature type="domain" description="Kazal-like" evidence="1">
    <location>
        <begin position="4"/>
        <end position="54"/>
    </location>
</feature>
<feature type="site" description="Reactive bond 3">
    <location>
        <begin position="16"/>
        <end position="17"/>
    </location>
</feature>
<feature type="glycosylation site" description="N-linked (GlcNAc...) asparagine">
    <location>
        <position position="43"/>
    </location>
</feature>
<feature type="disulfide bond">
    <location>
        <begin position="6"/>
        <end position="36"/>
    </location>
</feature>
<feature type="disulfide bond">
    <location>
        <begin position="14"/>
        <end position="33"/>
    </location>
</feature>
<feature type="disulfide bond">
    <location>
        <begin position="22"/>
        <end position="54"/>
    </location>
</feature>
<feature type="non-terminal residue">
    <location>
        <position position="1"/>
    </location>
</feature>
<feature type="non-terminal residue">
    <location>
        <position position="54"/>
    </location>
</feature>
<dbReference type="PIR" id="E61589">
    <property type="entry name" value="E61589"/>
</dbReference>
<dbReference type="SMR" id="P52242"/>
<dbReference type="GO" id="GO:0005576">
    <property type="term" value="C:extracellular region"/>
    <property type="evidence" value="ECO:0007669"/>
    <property type="project" value="UniProtKB-SubCell"/>
</dbReference>
<dbReference type="GO" id="GO:0004867">
    <property type="term" value="F:serine-type endopeptidase inhibitor activity"/>
    <property type="evidence" value="ECO:0007669"/>
    <property type="project" value="UniProtKB-KW"/>
</dbReference>
<dbReference type="CDD" id="cd00104">
    <property type="entry name" value="KAZAL_FS"/>
    <property type="match status" value="1"/>
</dbReference>
<dbReference type="FunFam" id="3.30.60.30:FF:000037">
    <property type="entry name" value="Ovomucoid"/>
    <property type="match status" value="1"/>
</dbReference>
<dbReference type="Gene3D" id="3.30.60.30">
    <property type="match status" value="1"/>
</dbReference>
<dbReference type="InterPro" id="IPR051597">
    <property type="entry name" value="Bifunctional_prot_inhibitor"/>
</dbReference>
<dbReference type="InterPro" id="IPR002350">
    <property type="entry name" value="Kazal_dom"/>
</dbReference>
<dbReference type="InterPro" id="IPR036058">
    <property type="entry name" value="Kazal_dom_sf"/>
</dbReference>
<dbReference type="InterPro" id="IPR001239">
    <property type="entry name" value="Prot_inh_Kazal-m"/>
</dbReference>
<dbReference type="PANTHER" id="PTHR47729:SF1">
    <property type="entry name" value="OVOMUCOID-LIKE-RELATED"/>
    <property type="match status" value="1"/>
</dbReference>
<dbReference type="PANTHER" id="PTHR47729">
    <property type="entry name" value="SERINE PEPTIDASE INHIBITOR, KAZAL TYPE 2, TANDEM DUPLICATE 1-RELATED"/>
    <property type="match status" value="1"/>
</dbReference>
<dbReference type="Pfam" id="PF00050">
    <property type="entry name" value="Kazal_1"/>
    <property type="match status" value="1"/>
</dbReference>
<dbReference type="PRINTS" id="PR00290">
    <property type="entry name" value="KAZALINHBTR"/>
</dbReference>
<dbReference type="SMART" id="SM00280">
    <property type="entry name" value="KAZAL"/>
    <property type="match status" value="1"/>
</dbReference>
<dbReference type="SUPFAM" id="SSF100895">
    <property type="entry name" value="Kazal-type serine protease inhibitors"/>
    <property type="match status" value="1"/>
</dbReference>
<dbReference type="PROSITE" id="PS00282">
    <property type="entry name" value="KAZAL_1"/>
    <property type="match status" value="1"/>
</dbReference>
<dbReference type="PROSITE" id="PS51465">
    <property type="entry name" value="KAZAL_2"/>
    <property type="match status" value="1"/>
</dbReference>
<organism>
    <name type="scientific">Haemorhous mexicanus</name>
    <name type="common">House finch</name>
    <name type="synonym">Carpodacus mexicanus</name>
    <dbReference type="NCBI Taxonomy" id="30427"/>
    <lineage>
        <taxon>Eukaryota</taxon>
        <taxon>Metazoa</taxon>
        <taxon>Chordata</taxon>
        <taxon>Craniata</taxon>
        <taxon>Vertebrata</taxon>
        <taxon>Euteleostomi</taxon>
        <taxon>Archelosauria</taxon>
        <taxon>Archosauria</taxon>
        <taxon>Dinosauria</taxon>
        <taxon>Saurischia</taxon>
        <taxon>Theropoda</taxon>
        <taxon>Coelurosauria</taxon>
        <taxon>Aves</taxon>
        <taxon>Neognathae</taxon>
        <taxon>Neoaves</taxon>
        <taxon>Telluraves</taxon>
        <taxon>Australaves</taxon>
        <taxon>Passeriformes</taxon>
        <taxon>Passeroidea</taxon>
        <taxon>Fringillidae</taxon>
        <taxon>Carduelinae</taxon>
        <taxon>Haemorhous</taxon>
    </lineage>
</organism>
<accession>P52242</accession>
<protein>
    <recommendedName>
        <fullName>Ovomucoid</fullName>
    </recommendedName>
</protein>
<evidence type="ECO:0000255" key="1">
    <source>
        <dbReference type="PROSITE-ProRule" id="PRU00798"/>
    </source>
</evidence>
<comment type="subcellular location">
    <subcellularLocation>
        <location>Secreted</location>
    </subcellularLocation>
</comment>
<comment type="domain">
    <text>Avian ovomucoid consists of three homologous, tandem Kazal family inhibitory domains.</text>
</comment>